<name>TARA_STAAM</name>
<keyword id="KW-0961">Cell wall biogenesis/degradation</keyword>
<keyword id="KW-0328">Glycosyltransferase</keyword>
<keyword id="KW-0777">Teichoic acid biosynthesis</keyword>
<keyword id="KW-0808">Transferase</keyword>
<sequence>MTVEERSNTAKVDILGVDFDNTTMLQMVENIKTFFANQSTNNLFIVTANPEIVNYATTHQAYLELINQASYIVADGTGVVKASHRLKQPLAHRIPGIELMDECLKIAHVNHQKVFLLGATNEVVEAAQYALQQRYPNISFAHHHGYIDLEDETVVKRIKLFKPDYIFVGMGFPKQEEWIMTHENQFESTVMMGVGGSLEVFAGAKKRAPYIFRKLNIEWIYRALIDWKRIGRLKSIPIFMYKIAKAKRKIKKAK</sequence>
<gene>
    <name type="primary">tarA</name>
    <name type="ordered locus">SAV0636</name>
</gene>
<feature type="chain" id="PRO_0000208442" description="N-acetylglucosaminyldiphosphoundecaprenol N-acetyl-beta-D-mannosaminyltransferase">
    <location>
        <begin position="1"/>
        <end position="254"/>
    </location>
</feature>
<dbReference type="EC" id="2.4.1.187" evidence="1"/>
<dbReference type="EMBL" id="BA000017">
    <property type="protein sequence ID" value="BAB56798.1"/>
    <property type="molecule type" value="Genomic_DNA"/>
</dbReference>
<dbReference type="RefSeq" id="WP_000215388.1">
    <property type="nucleotide sequence ID" value="NC_002758.2"/>
</dbReference>
<dbReference type="SMR" id="Q99VX9"/>
<dbReference type="CAZy" id="GT26">
    <property type="family name" value="Glycosyltransferase Family 26"/>
</dbReference>
<dbReference type="KEGG" id="sav:SAV0636"/>
<dbReference type="HOGENOM" id="CLU_063203_3_1_9"/>
<dbReference type="PhylomeDB" id="Q99VX9"/>
<dbReference type="UniPathway" id="UPA00790"/>
<dbReference type="Proteomes" id="UP000002481">
    <property type="component" value="Chromosome"/>
</dbReference>
<dbReference type="GO" id="GO:0047244">
    <property type="term" value="F:N-acetylglucosaminyldiphosphoundecaprenol N-acetyl-beta-D-mannosaminyltransferase activity"/>
    <property type="evidence" value="ECO:0007669"/>
    <property type="project" value="UniProtKB-UniRule"/>
</dbReference>
<dbReference type="GO" id="GO:0071555">
    <property type="term" value="P:cell wall organization"/>
    <property type="evidence" value="ECO:0007669"/>
    <property type="project" value="UniProtKB-KW"/>
</dbReference>
<dbReference type="GO" id="GO:0019350">
    <property type="term" value="P:teichoic acid biosynthetic process"/>
    <property type="evidence" value="ECO:0007669"/>
    <property type="project" value="UniProtKB-UniRule"/>
</dbReference>
<dbReference type="CDD" id="cd06533">
    <property type="entry name" value="Glyco_transf_WecG_TagA"/>
    <property type="match status" value="1"/>
</dbReference>
<dbReference type="HAMAP" id="MF_02070">
    <property type="entry name" value="TagA_TarA"/>
    <property type="match status" value="1"/>
</dbReference>
<dbReference type="InterPro" id="IPR053391">
    <property type="entry name" value="TAB_Glycosyltransferase"/>
</dbReference>
<dbReference type="InterPro" id="IPR034714">
    <property type="entry name" value="TagA_TarA"/>
</dbReference>
<dbReference type="InterPro" id="IPR004629">
    <property type="entry name" value="WecG_TagA_CpsF"/>
</dbReference>
<dbReference type="NCBIfam" id="NF041710">
    <property type="entry name" value="UDPacetylman_taseTarA"/>
    <property type="match status" value="1"/>
</dbReference>
<dbReference type="NCBIfam" id="TIGR00696">
    <property type="entry name" value="wecG_tagA_cpsF"/>
    <property type="match status" value="1"/>
</dbReference>
<dbReference type="PANTHER" id="PTHR34136">
    <property type="match status" value="1"/>
</dbReference>
<dbReference type="PANTHER" id="PTHR34136:SF1">
    <property type="entry name" value="UDP-N-ACETYL-D-MANNOSAMINURONIC ACID TRANSFERASE"/>
    <property type="match status" value="1"/>
</dbReference>
<dbReference type="Pfam" id="PF03808">
    <property type="entry name" value="Glyco_tran_WecG"/>
    <property type="match status" value="1"/>
</dbReference>
<protein>
    <recommendedName>
        <fullName evidence="1">N-acetylglucosaminyldiphosphoundecaprenol N-acetyl-beta-D-mannosaminyltransferase</fullName>
        <ecNumber evidence="1">2.4.1.187</ecNumber>
    </recommendedName>
    <alternativeName>
        <fullName evidence="1">N-acetylmannosaminyltransferase</fullName>
    </alternativeName>
    <alternativeName>
        <fullName evidence="1">UDP-N-acetylmannosamine transferase</fullName>
    </alternativeName>
    <alternativeName>
        <fullName evidence="1">UDP-N-acetylmannosamine:N-acetylglucosaminyl pyrophosphorylundecaprenol N-acetylmannosaminyltransferase</fullName>
    </alternativeName>
</protein>
<reference key="1">
    <citation type="journal article" date="2001" name="Lancet">
        <title>Whole genome sequencing of meticillin-resistant Staphylococcus aureus.</title>
        <authorList>
            <person name="Kuroda M."/>
            <person name="Ohta T."/>
            <person name="Uchiyama I."/>
            <person name="Baba T."/>
            <person name="Yuzawa H."/>
            <person name="Kobayashi I."/>
            <person name="Cui L."/>
            <person name="Oguchi A."/>
            <person name="Aoki K."/>
            <person name="Nagai Y."/>
            <person name="Lian J.-Q."/>
            <person name="Ito T."/>
            <person name="Kanamori M."/>
            <person name="Matsumaru H."/>
            <person name="Maruyama A."/>
            <person name="Murakami H."/>
            <person name="Hosoyama A."/>
            <person name="Mizutani-Ui Y."/>
            <person name="Takahashi N.K."/>
            <person name="Sawano T."/>
            <person name="Inoue R."/>
            <person name="Kaito C."/>
            <person name="Sekimizu K."/>
            <person name="Hirakawa H."/>
            <person name="Kuhara S."/>
            <person name="Goto S."/>
            <person name="Yabuzaki J."/>
            <person name="Kanehisa M."/>
            <person name="Yamashita A."/>
            <person name="Oshima K."/>
            <person name="Furuya K."/>
            <person name="Yoshino C."/>
            <person name="Shiba T."/>
            <person name="Hattori M."/>
            <person name="Ogasawara N."/>
            <person name="Hayashi H."/>
            <person name="Hiramatsu K."/>
        </authorList>
    </citation>
    <scope>NUCLEOTIDE SEQUENCE [LARGE SCALE GENOMIC DNA]</scope>
    <source>
        <strain>Mu50 / ATCC 700699</strain>
    </source>
</reference>
<organism>
    <name type="scientific">Staphylococcus aureus (strain Mu50 / ATCC 700699)</name>
    <dbReference type="NCBI Taxonomy" id="158878"/>
    <lineage>
        <taxon>Bacteria</taxon>
        <taxon>Bacillati</taxon>
        <taxon>Bacillota</taxon>
        <taxon>Bacilli</taxon>
        <taxon>Bacillales</taxon>
        <taxon>Staphylococcaceae</taxon>
        <taxon>Staphylococcus</taxon>
    </lineage>
</organism>
<comment type="function">
    <text evidence="1">Catalyzes the conversion of GlcNAc-PP-undecaprenol into ManNAc-GlcNAc-PP-undecaprenol, the first committed lipid intermediate in the de novo synthesis of teichoic acid.</text>
</comment>
<comment type="catalytic activity">
    <reaction evidence="1">
        <text>UDP-N-acetyl-alpha-D-mannosamine + N-acetyl-alpha-D-glucosaminyl-di-trans,octa-cis-undecaprenyl diphosphate = N-acetyl-beta-D-mannosaminyl-(1-&gt;4)-N-acetyl-alpha-D-glucosaminyl di-trans,octa-cis-undecaprenyl diphosphate + UDP + H(+)</text>
        <dbReference type="Rhea" id="RHEA:16053"/>
        <dbReference type="ChEBI" id="CHEBI:15378"/>
        <dbReference type="ChEBI" id="CHEBI:58223"/>
        <dbReference type="ChEBI" id="CHEBI:62959"/>
        <dbReference type="ChEBI" id="CHEBI:68623"/>
        <dbReference type="ChEBI" id="CHEBI:132210"/>
        <dbReference type="EC" id="2.4.1.187"/>
    </reaction>
</comment>
<comment type="pathway">
    <text evidence="2">Cell wall biogenesis; poly(ribitol phosphate) teichoic acid biosynthesis.</text>
</comment>
<comment type="similarity">
    <text evidence="1">Belongs to the glycosyltransferase 26 family. TagA/TarA subfamily.</text>
</comment>
<accession>Q99VX9</accession>
<proteinExistence type="inferred from homology"/>
<evidence type="ECO:0000255" key="1">
    <source>
        <dbReference type="HAMAP-Rule" id="MF_02070"/>
    </source>
</evidence>
<evidence type="ECO:0000305" key="2"/>